<reference key="1">
    <citation type="journal article" date="1995" name="Science">
        <title>Whole-genome random sequencing and assembly of Haemophilus influenzae Rd.</title>
        <authorList>
            <person name="Fleischmann R.D."/>
            <person name="Adams M.D."/>
            <person name="White O."/>
            <person name="Clayton R.A."/>
            <person name="Kirkness E.F."/>
            <person name="Kerlavage A.R."/>
            <person name="Bult C.J."/>
            <person name="Tomb J.-F."/>
            <person name="Dougherty B.A."/>
            <person name="Merrick J.M."/>
            <person name="McKenney K."/>
            <person name="Sutton G.G."/>
            <person name="FitzHugh W."/>
            <person name="Fields C.A."/>
            <person name="Gocayne J.D."/>
            <person name="Scott J.D."/>
            <person name="Shirley R."/>
            <person name="Liu L.-I."/>
            <person name="Glodek A."/>
            <person name="Kelley J.M."/>
            <person name="Weidman J.F."/>
            <person name="Phillips C.A."/>
            <person name="Spriggs T."/>
            <person name="Hedblom E."/>
            <person name="Cotton M.D."/>
            <person name="Utterback T.R."/>
            <person name="Hanna M.C."/>
            <person name="Nguyen D.T."/>
            <person name="Saudek D.M."/>
            <person name="Brandon R.C."/>
            <person name="Fine L.D."/>
            <person name="Fritchman J.L."/>
            <person name="Fuhrmann J.L."/>
            <person name="Geoghagen N.S.M."/>
            <person name="Gnehm C.L."/>
            <person name="McDonald L.A."/>
            <person name="Small K.V."/>
            <person name="Fraser C.M."/>
            <person name="Smith H.O."/>
            <person name="Venter J.C."/>
        </authorList>
    </citation>
    <scope>NUCLEOTIDE SEQUENCE [LARGE SCALE GENOMIC DNA]</scope>
    <source>
        <strain>ATCC 51907 / DSM 11121 / KW20 / Rd</strain>
    </source>
</reference>
<reference key="2">
    <citation type="journal article" date="2005" name="Acta Crystallogr. F">
        <title>Structure of the pseudouridine synthase RsuA from Haemophilus influenzae.</title>
        <authorList>
            <person name="Matte A."/>
            <person name="Louie G.V."/>
            <person name="Sivaraman J."/>
            <person name="Cygler M."/>
            <person name="Burley S.K."/>
        </authorList>
    </citation>
    <scope>X-RAY CRYSTALLOGRAPHY (1.59 ANGSTROMS)</scope>
</reference>
<protein>
    <recommendedName>
        <fullName>Ribosomal small subunit pseudouridine synthase A</fullName>
        <ecNumber>5.4.99.19</ecNumber>
    </recommendedName>
    <alternativeName>
        <fullName>16S pseudouridylate 516 synthase</fullName>
    </alternativeName>
    <alternativeName>
        <fullName>16S rRNA pseudouridine(516) synthase</fullName>
    </alternativeName>
    <alternativeName>
        <fullName>rRNA pseudouridylate synthase A</fullName>
    </alternativeName>
    <alternativeName>
        <fullName>rRNA-uridine isomerase A</fullName>
    </alternativeName>
</protein>
<sequence length="232" mass="26213">MRLDKFIAENVGLTRSQATKAIRQSAVKINGEIVKSGSVQISQEDEIYFEDELLTWIEEGQYFMLNKPQGCVCSNDDGDYPTIYQFFDYPLAGKLHSAGRLDVDTTGLVLLTDDGQWSHRITSPKHHCEKTYLVTLADPVEENYSAACAEGILLRGEKEPTKPAKLEILDDYNVNLTISEGRYHQVKRMFAALGNKVVGLHRWKIGDVVLDESLEEGEYRPLTQSEIEKLVK</sequence>
<proteinExistence type="evidence at protein level"/>
<accession>P45124</accession>
<organism>
    <name type="scientific">Haemophilus influenzae (strain ATCC 51907 / DSM 11121 / KW20 / Rd)</name>
    <dbReference type="NCBI Taxonomy" id="71421"/>
    <lineage>
        <taxon>Bacteria</taxon>
        <taxon>Pseudomonadati</taxon>
        <taxon>Pseudomonadota</taxon>
        <taxon>Gammaproteobacteria</taxon>
        <taxon>Pasteurellales</taxon>
        <taxon>Pasteurellaceae</taxon>
        <taxon>Haemophilus</taxon>
    </lineage>
</organism>
<dbReference type="EC" id="5.4.99.19"/>
<dbReference type="EMBL" id="L42023">
    <property type="protein sequence ID" value="AAC22895.1"/>
    <property type="molecule type" value="Genomic_DNA"/>
</dbReference>
<dbReference type="PIR" id="F64169">
    <property type="entry name" value="F64169"/>
</dbReference>
<dbReference type="RefSeq" id="NP_439399.1">
    <property type="nucleotide sequence ID" value="NC_000907.1"/>
</dbReference>
<dbReference type="PDB" id="1VIO">
    <property type="method" value="X-ray"/>
    <property type="resolution" value="1.59 A"/>
    <property type="chains" value="A/B=2-232"/>
</dbReference>
<dbReference type="PDBsum" id="1VIO"/>
<dbReference type="SMR" id="P45124"/>
<dbReference type="STRING" id="71421.HI_1243"/>
<dbReference type="DrugBank" id="DB01955">
    <property type="generic name" value="1,4-Butanediol"/>
</dbReference>
<dbReference type="EnsemblBacteria" id="AAC22895">
    <property type="protein sequence ID" value="AAC22895"/>
    <property type="gene ID" value="HI_1243"/>
</dbReference>
<dbReference type="KEGG" id="hin:HI_1243"/>
<dbReference type="PATRIC" id="fig|71421.8.peg.1295"/>
<dbReference type="eggNOG" id="COG1187">
    <property type="taxonomic scope" value="Bacteria"/>
</dbReference>
<dbReference type="HOGENOM" id="CLU_024979_1_2_6"/>
<dbReference type="OrthoDB" id="9807213at2"/>
<dbReference type="PhylomeDB" id="P45124"/>
<dbReference type="BioCyc" id="HINF71421:G1GJ1-1273-MONOMER"/>
<dbReference type="EvolutionaryTrace" id="P45124"/>
<dbReference type="Proteomes" id="UP000000579">
    <property type="component" value="Chromosome"/>
</dbReference>
<dbReference type="GO" id="GO:0005829">
    <property type="term" value="C:cytosol"/>
    <property type="evidence" value="ECO:0000318"/>
    <property type="project" value="GO_Central"/>
</dbReference>
<dbReference type="GO" id="GO:0160136">
    <property type="term" value="F:16S rRNA pseudouridine(516) synthase activity"/>
    <property type="evidence" value="ECO:0007669"/>
    <property type="project" value="UniProtKB-EC"/>
</dbReference>
<dbReference type="GO" id="GO:0009982">
    <property type="term" value="F:pseudouridine synthase activity"/>
    <property type="evidence" value="ECO:0000318"/>
    <property type="project" value="GO_Central"/>
</dbReference>
<dbReference type="GO" id="GO:0003723">
    <property type="term" value="F:RNA binding"/>
    <property type="evidence" value="ECO:0007669"/>
    <property type="project" value="UniProtKB-KW"/>
</dbReference>
<dbReference type="GO" id="GO:0000455">
    <property type="term" value="P:enzyme-directed rRNA pseudouridine synthesis"/>
    <property type="evidence" value="ECO:0000318"/>
    <property type="project" value="GO_Central"/>
</dbReference>
<dbReference type="CDD" id="cd02553">
    <property type="entry name" value="PseudoU_synth_RsuA"/>
    <property type="match status" value="1"/>
</dbReference>
<dbReference type="CDD" id="cd00165">
    <property type="entry name" value="S4"/>
    <property type="match status" value="1"/>
</dbReference>
<dbReference type="FunFam" id="3.30.70.1560:FF:000001">
    <property type="entry name" value="Pseudouridine synthase"/>
    <property type="match status" value="1"/>
</dbReference>
<dbReference type="FunFam" id="3.30.70.580:FF:000004">
    <property type="entry name" value="Pseudouridine synthase"/>
    <property type="match status" value="1"/>
</dbReference>
<dbReference type="Gene3D" id="3.30.70.1560">
    <property type="entry name" value="Alpha-L RNA-binding motif"/>
    <property type="match status" value="1"/>
</dbReference>
<dbReference type="Gene3D" id="3.30.70.580">
    <property type="entry name" value="Pseudouridine synthase I, catalytic domain, N-terminal subdomain"/>
    <property type="match status" value="1"/>
</dbReference>
<dbReference type="Gene3D" id="3.10.290.10">
    <property type="entry name" value="RNA-binding S4 domain"/>
    <property type="match status" value="1"/>
</dbReference>
<dbReference type="InterPro" id="IPR042092">
    <property type="entry name" value="PsdUridine_s_RsuA/RluB/E/F_cat"/>
</dbReference>
<dbReference type="InterPro" id="IPR020103">
    <property type="entry name" value="PsdUridine_synth_cat_dom_sf"/>
</dbReference>
<dbReference type="InterPro" id="IPR006145">
    <property type="entry name" value="PsdUridine_synth_RsuA/RluA"/>
</dbReference>
<dbReference type="InterPro" id="IPR000748">
    <property type="entry name" value="PsdUridine_synth_RsuA/RluB/E/F"/>
</dbReference>
<dbReference type="InterPro" id="IPR018496">
    <property type="entry name" value="PsdUridine_synth_RsuA/RluB_CS"/>
</dbReference>
<dbReference type="InterPro" id="IPR050343">
    <property type="entry name" value="RsuA_PseudoU_synthase"/>
</dbReference>
<dbReference type="InterPro" id="IPR002942">
    <property type="entry name" value="S4_RNA-bd"/>
</dbReference>
<dbReference type="InterPro" id="IPR036986">
    <property type="entry name" value="S4_RNA-bd_sf"/>
</dbReference>
<dbReference type="InterPro" id="IPR020094">
    <property type="entry name" value="TruA/RsuA/RluB/E/F_N"/>
</dbReference>
<dbReference type="NCBIfam" id="NF008097">
    <property type="entry name" value="PRK10839.1"/>
    <property type="match status" value="1"/>
</dbReference>
<dbReference type="NCBIfam" id="TIGR00093">
    <property type="entry name" value="pseudouridine synthase"/>
    <property type="match status" value="1"/>
</dbReference>
<dbReference type="PANTHER" id="PTHR47683:SF4">
    <property type="entry name" value="PSEUDOURIDINE SYNTHASE"/>
    <property type="match status" value="1"/>
</dbReference>
<dbReference type="PANTHER" id="PTHR47683">
    <property type="entry name" value="PSEUDOURIDINE SYNTHASE FAMILY PROTEIN-RELATED"/>
    <property type="match status" value="1"/>
</dbReference>
<dbReference type="Pfam" id="PF00849">
    <property type="entry name" value="PseudoU_synth_2"/>
    <property type="match status" value="1"/>
</dbReference>
<dbReference type="Pfam" id="PF01479">
    <property type="entry name" value="S4"/>
    <property type="match status" value="1"/>
</dbReference>
<dbReference type="SMART" id="SM00363">
    <property type="entry name" value="S4"/>
    <property type="match status" value="1"/>
</dbReference>
<dbReference type="SUPFAM" id="SSF55174">
    <property type="entry name" value="Alpha-L RNA-binding motif"/>
    <property type="match status" value="1"/>
</dbReference>
<dbReference type="SUPFAM" id="SSF55120">
    <property type="entry name" value="Pseudouridine synthase"/>
    <property type="match status" value="1"/>
</dbReference>
<dbReference type="PROSITE" id="PS01149">
    <property type="entry name" value="PSI_RSU"/>
    <property type="match status" value="1"/>
</dbReference>
<dbReference type="PROSITE" id="PS50889">
    <property type="entry name" value="S4"/>
    <property type="match status" value="1"/>
</dbReference>
<keyword id="KW-0002">3D-structure</keyword>
<keyword id="KW-0413">Isomerase</keyword>
<keyword id="KW-1185">Reference proteome</keyword>
<keyword id="KW-0694">RNA-binding</keyword>
<keyword id="KW-0698">rRNA processing</keyword>
<gene>
    <name type="primary">rsuA</name>
    <name type="ordered locus">HI_1243</name>
</gene>
<feature type="chain" id="PRO_0000099969" description="Ribosomal small subunit pseudouridine synthase A">
    <location>
        <begin position="1"/>
        <end position="232"/>
    </location>
</feature>
<feature type="domain" description="S4 RNA-binding" evidence="2">
    <location>
        <begin position="1"/>
        <end position="68"/>
    </location>
</feature>
<feature type="active site" description="Nucleophile" evidence="1">
    <location>
        <position position="102"/>
    </location>
</feature>
<feature type="helix" evidence="4">
    <location>
        <begin position="3"/>
        <end position="11"/>
    </location>
</feature>
<feature type="helix" evidence="4">
    <location>
        <begin position="15"/>
        <end position="23"/>
    </location>
</feature>
<feature type="strand" evidence="4">
    <location>
        <begin position="27"/>
        <end position="29"/>
    </location>
</feature>
<feature type="strand" evidence="4">
    <location>
        <begin position="47"/>
        <end position="49"/>
    </location>
</feature>
<feature type="strand" evidence="4">
    <location>
        <begin position="62"/>
        <end position="67"/>
    </location>
</feature>
<feature type="strand" evidence="4">
    <location>
        <begin position="72"/>
        <end position="74"/>
    </location>
</feature>
<feature type="helix" evidence="4">
    <location>
        <begin position="83"/>
        <end position="86"/>
    </location>
</feature>
<feature type="helix" evidence="4">
    <location>
        <begin position="91"/>
        <end position="94"/>
    </location>
</feature>
<feature type="strand" evidence="4">
    <location>
        <begin position="96"/>
        <end position="99"/>
    </location>
</feature>
<feature type="strand" evidence="4">
    <location>
        <begin position="106"/>
        <end position="113"/>
    </location>
</feature>
<feature type="helix" evidence="4">
    <location>
        <begin position="115"/>
        <end position="122"/>
    </location>
</feature>
<feature type="strand" evidence="4">
    <location>
        <begin position="130"/>
        <end position="138"/>
    </location>
</feature>
<feature type="helix" evidence="4">
    <location>
        <begin position="144"/>
        <end position="150"/>
    </location>
</feature>
<feature type="strand" evidence="4">
    <location>
        <begin position="165"/>
        <end position="168"/>
    </location>
</feature>
<feature type="strand" evidence="4">
    <location>
        <begin position="170"/>
        <end position="179"/>
    </location>
</feature>
<feature type="helix" evidence="4">
    <location>
        <begin position="185"/>
        <end position="192"/>
    </location>
</feature>
<feature type="strand" evidence="4">
    <location>
        <begin position="197"/>
        <end position="205"/>
    </location>
</feature>
<feature type="strand" evidence="4">
    <location>
        <begin position="219"/>
        <end position="221"/>
    </location>
</feature>
<feature type="helix" evidence="4">
    <location>
        <begin position="224"/>
        <end position="229"/>
    </location>
</feature>
<name>RSUA_HAEIN</name>
<comment type="function">
    <text evidence="1">Responsible for synthesis of pseudouridine from uracil-516 in 16S ribosomal RNA.</text>
</comment>
<comment type="catalytic activity">
    <reaction>
        <text>uridine(516) in 16S rRNA = pseudouridine(516) in 16S rRNA</text>
        <dbReference type="Rhea" id="RHEA:38867"/>
        <dbReference type="Rhea" id="RHEA-COMP:10089"/>
        <dbReference type="Rhea" id="RHEA-COMP:10090"/>
        <dbReference type="ChEBI" id="CHEBI:65314"/>
        <dbReference type="ChEBI" id="CHEBI:65315"/>
        <dbReference type="EC" id="5.4.99.19"/>
    </reaction>
</comment>
<comment type="similarity">
    <text evidence="3">Belongs to the pseudouridine synthase RsuA family.</text>
</comment>
<evidence type="ECO:0000250" key="1"/>
<evidence type="ECO:0000255" key="2">
    <source>
        <dbReference type="PROSITE-ProRule" id="PRU00182"/>
    </source>
</evidence>
<evidence type="ECO:0000305" key="3"/>
<evidence type="ECO:0007829" key="4">
    <source>
        <dbReference type="PDB" id="1VIO"/>
    </source>
</evidence>